<accession>Q08522</accession>
<sequence length="113" mass="12545">MVVNPLTKIGLTSQDSHSMGTFAALKIFFTDLEISGPIPSPSMNETVYLPVEGLGLPVYLPIEGCFTVAKNLLEVFLKKVFLNIIKKYYNCCSFPICILLSTKVIQVQKKCIQ</sequence>
<organism>
    <name type="scientific">Saccharomyces cerevisiae (strain ATCC 204508 / S288c)</name>
    <name type="common">Baker's yeast</name>
    <dbReference type="NCBI Taxonomy" id="559292"/>
    <lineage>
        <taxon>Eukaryota</taxon>
        <taxon>Fungi</taxon>
        <taxon>Dikarya</taxon>
        <taxon>Ascomycota</taxon>
        <taxon>Saccharomycotina</taxon>
        <taxon>Saccharomycetes</taxon>
        <taxon>Saccharomycetales</taxon>
        <taxon>Saccharomycetaceae</taxon>
        <taxon>Saccharomyces</taxon>
    </lineage>
</organism>
<dbReference type="EMBL" id="Z75043">
    <property type="protein sequence ID" value="CAA99334.1"/>
    <property type="molecule type" value="Genomic_DNA"/>
</dbReference>
<dbReference type="PIR" id="S67020">
    <property type="entry name" value="S67020"/>
</dbReference>
<dbReference type="STRING" id="4932.YOR135C"/>
<dbReference type="PaxDb" id="4932-YOR135C"/>
<dbReference type="EnsemblFungi" id="YOR135C_mRNA">
    <property type="protein sequence ID" value="YOR135C"/>
    <property type="gene ID" value="YOR135C"/>
</dbReference>
<dbReference type="AGR" id="SGD:S000005661"/>
<dbReference type="SGD" id="S000005661">
    <property type="gene designation" value="IRC14"/>
</dbReference>
<dbReference type="HOGENOM" id="CLU_2135476_0_0_1"/>
<dbReference type="GO" id="GO:0030437">
    <property type="term" value="P:ascospore formation"/>
    <property type="evidence" value="ECO:0007001"/>
    <property type="project" value="SGD"/>
</dbReference>
<dbReference type="GO" id="GO:0006312">
    <property type="term" value="P:mitotic recombination"/>
    <property type="evidence" value="ECO:0000315"/>
    <property type="project" value="SGD"/>
</dbReference>
<name>IRC14_YEAST</name>
<evidence type="ECO:0000269" key="1">
    <source>
    </source>
</evidence>
<evidence type="ECO:0000269" key="2">
    <source>
    </source>
</evidence>
<evidence type="ECO:0000305" key="3"/>
<evidence type="ECO:0000305" key="4">
    <source>
    </source>
</evidence>
<protein>
    <recommendedName>
        <fullName>Putative increased recombination centers protein 14</fullName>
    </recommendedName>
</protein>
<comment type="disruption phenotype">
    <text evidence="1 2">Displays increased levels of spontaneous RAD52 foci in proliferating diploid cells and exhibits an absence of G1 checkpoint in response to linoleic acid hydroperoxide (LoaOOH) treatment.</text>
</comment>
<comment type="miscellaneous">
    <text evidence="3">Partially overlaps IDH2. Disruption phenotypes caused by deletion of this gene may also be a result of a defect in its overlapping gene.</text>
</comment>
<comment type="caution">
    <text evidence="4">Product of a dubious gene prediction unlikely to encode a functional protein. Because of that it is not part of the S.cerevisiae S288c complete/reference proteome set.</text>
</comment>
<reference key="1">
    <citation type="journal article" date="1997" name="Nature">
        <title>The nucleotide sequence of Saccharomyces cerevisiae chromosome XV.</title>
        <authorList>
            <person name="Dujon B."/>
            <person name="Albermann K."/>
            <person name="Aldea M."/>
            <person name="Alexandraki D."/>
            <person name="Ansorge W."/>
            <person name="Arino J."/>
            <person name="Benes V."/>
            <person name="Bohn C."/>
            <person name="Bolotin-Fukuhara M."/>
            <person name="Bordonne R."/>
            <person name="Boyer J."/>
            <person name="Camasses A."/>
            <person name="Casamayor A."/>
            <person name="Casas C."/>
            <person name="Cheret G."/>
            <person name="Cziepluch C."/>
            <person name="Daignan-Fornier B."/>
            <person name="Dang V.-D."/>
            <person name="de Haan M."/>
            <person name="Delius H."/>
            <person name="Durand P."/>
            <person name="Fairhead C."/>
            <person name="Feldmann H."/>
            <person name="Gaillon L."/>
            <person name="Galisson F."/>
            <person name="Gamo F.-J."/>
            <person name="Gancedo C."/>
            <person name="Goffeau A."/>
            <person name="Goulding S.E."/>
            <person name="Grivell L.A."/>
            <person name="Habbig B."/>
            <person name="Hand N.J."/>
            <person name="Hani J."/>
            <person name="Hattenhorst U."/>
            <person name="Hebling U."/>
            <person name="Hernando Y."/>
            <person name="Herrero E."/>
            <person name="Heumann K."/>
            <person name="Hiesel R."/>
            <person name="Hilger F."/>
            <person name="Hofmann B."/>
            <person name="Hollenberg C.P."/>
            <person name="Hughes B."/>
            <person name="Jauniaux J.-C."/>
            <person name="Kalogeropoulos A."/>
            <person name="Katsoulou C."/>
            <person name="Kordes E."/>
            <person name="Lafuente M.J."/>
            <person name="Landt O."/>
            <person name="Louis E.J."/>
            <person name="Maarse A.C."/>
            <person name="Madania A."/>
            <person name="Mannhaupt G."/>
            <person name="Marck C."/>
            <person name="Martin R.P."/>
            <person name="Mewes H.-W."/>
            <person name="Michaux G."/>
            <person name="Paces V."/>
            <person name="Parle-McDermott A.G."/>
            <person name="Pearson B.M."/>
            <person name="Perrin A."/>
            <person name="Pettersson B."/>
            <person name="Poch O."/>
            <person name="Pohl T.M."/>
            <person name="Poirey R."/>
            <person name="Portetelle D."/>
            <person name="Pujol A."/>
            <person name="Purnelle B."/>
            <person name="Ramezani Rad M."/>
            <person name="Rechmann S."/>
            <person name="Schwager C."/>
            <person name="Schweizer M."/>
            <person name="Sor F."/>
            <person name="Sterky F."/>
            <person name="Tarassov I.A."/>
            <person name="Teodoru C."/>
            <person name="Tettelin H."/>
            <person name="Thierry A."/>
            <person name="Tobiasch E."/>
            <person name="Tzermia M."/>
            <person name="Uhlen M."/>
            <person name="Unseld M."/>
            <person name="Valens M."/>
            <person name="Vandenbol M."/>
            <person name="Vetter I."/>
            <person name="Vlcek C."/>
            <person name="Voet M."/>
            <person name="Volckaert G."/>
            <person name="Voss H."/>
            <person name="Wambutt R."/>
            <person name="Wedler H."/>
            <person name="Wiemann S."/>
            <person name="Winsor B."/>
            <person name="Wolfe K.H."/>
            <person name="Zollner A."/>
            <person name="Zumstein E."/>
            <person name="Kleine K."/>
        </authorList>
    </citation>
    <scope>NUCLEOTIDE SEQUENCE [LARGE SCALE GENOMIC DNA]</scope>
    <source>
        <strain>ATCC 204508 / S288c</strain>
    </source>
</reference>
<reference key="2">
    <citation type="journal article" date="2014" name="G3 (Bethesda)">
        <title>The reference genome sequence of Saccharomyces cerevisiae: Then and now.</title>
        <authorList>
            <person name="Engel S.R."/>
            <person name="Dietrich F.S."/>
            <person name="Fisk D.G."/>
            <person name="Binkley G."/>
            <person name="Balakrishnan R."/>
            <person name="Costanzo M.C."/>
            <person name="Dwight S.S."/>
            <person name="Hitz B.C."/>
            <person name="Karra K."/>
            <person name="Nash R.S."/>
            <person name="Weng S."/>
            <person name="Wong E.D."/>
            <person name="Lloyd P."/>
            <person name="Skrzypek M.S."/>
            <person name="Miyasato S.R."/>
            <person name="Simison M."/>
            <person name="Cherry J.M."/>
        </authorList>
    </citation>
    <scope>GENOME REANNOTATION</scope>
    <source>
        <strain>ATCC 204508 / S288c</strain>
    </source>
</reference>
<reference key="3">
    <citation type="journal article" date="2007" name="PLoS Genet.">
        <title>Genome-wide analysis of Rad52 foci reveals diverse mechanisms impacting recombination.</title>
        <authorList>
            <person name="Alvaro D."/>
            <person name="Lisby M."/>
            <person name="Rothstein R."/>
        </authorList>
    </citation>
    <scope>DISRUPTION PHENOTYPE</scope>
</reference>
<reference key="4">
    <citation type="journal article" date="2008" name="FEMS Yeast Res.">
        <title>Oxidant-induced cell-cycle delay in Saccharomyces cerevisiae: the involvement of the SWI6 transcription factor.</title>
        <authorList>
            <person name="Fong C.S."/>
            <person name="Temple M.D."/>
            <person name="Alic N."/>
            <person name="Chiu J."/>
            <person name="Durchdewald M."/>
            <person name="Thorpe G.W."/>
            <person name="Higgins V.J."/>
            <person name="Dawes I.W."/>
        </authorList>
    </citation>
    <scope>DISRUPTION PHENOTYPE</scope>
</reference>
<gene>
    <name type="primary">IRC14</name>
    <name type="ordered locus">YOR135C</name>
    <name type="ORF">O3323</name>
</gene>
<feature type="chain" id="PRO_0000299715" description="Putative increased recombination centers protein 14">
    <location>
        <begin position="1"/>
        <end position="113"/>
    </location>
</feature>
<proteinExistence type="uncertain"/>